<accession>P85746</accession>
<comment type="function">
    <text evidence="4">Mediates visceral muscle contractile activity (myotropic activity).</text>
</comment>
<comment type="subcellular location">
    <subcellularLocation>
        <location evidence="4">Secreted</location>
    </subcellularLocation>
</comment>
<comment type="similarity">
    <text evidence="1">Belongs to the periviscerokinin family.</text>
</comment>
<proteinExistence type="evidence at protein level"/>
<protein>
    <recommendedName>
        <fullName evidence="3">Periviscerokinin-3</fullName>
        <shortName evidence="3">PriVa-PVK-3</shortName>
    </recommendedName>
</protein>
<keyword id="KW-0027">Amidation</keyword>
<keyword id="KW-0903">Direct protein sequencing</keyword>
<keyword id="KW-0527">Neuropeptide</keyword>
<keyword id="KW-0964">Secreted</keyword>
<evidence type="ECO:0000255" key="1"/>
<evidence type="ECO:0000269" key="2">
    <source>
    </source>
</evidence>
<evidence type="ECO:0000303" key="3">
    <source>
    </source>
</evidence>
<evidence type="ECO:0000305" key="4"/>
<sequence>GSSGMIPFPRV</sequence>
<organism>
    <name type="scientific">Princisia vanwaerebeki</name>
    <name type="common">Tiger hisser roach</name>
    <dbReference type="NCBI Taxonomy" id="1661849"/>
    <lineage>
        <taxon>Eukaryota</taxon>
        <taxon>Metazoa</taxon>
        <taxon>Ecdysozoa</taxon>
        <taxon>Arthropoda</taxon>
        <taxon>Hexapoda</taxon>
        <taxon>Insecta</taxon>
        <taxon>Pterygota</taxon>
        <taxon>Neoptera</taxon>
        <taxon>Polyneoptera</taxon>
        <taxon>Dictyoptera</taxon>
        <taxon>Blattodea</taxon>
        <taxon>Blaberoidea</taxon>
        <taxon>Blaberidae</taxon>
        <taxon>Oxyhaloinae</taxon>
        <taxon>Princisia</taxon>
    </lineage>
</organism>
<feature type="peptide" id="PRO_0000378852" description="Periviscerokinin-3" evidence="2">
    <location>
        <begin position="1"/>
        <end position="11"/>
    </location>
</feature>
<feature type="modified residue" description="Valine amide" evidence="2">
    <location>
        <position position="11"/>
    </location>
</feature>
<name>PVK3_PRIVA</name>
<dbReference type="GO" id="GO:0005576">
    <property type="term" value="C:extracellular region"/>
    <property type="evidence" value="ECO:0007669"/>
    <property type="project" value="UniProtKB-SubCell"/>
</dbReference>
<dbReference type="GO" id="GO:0007218">
    <property type="term" value="P:neuropeptide signaling pathway"/>
    <property type="evidence" value="ECO:0007669"/>
    <property type="project" value="UniProtKB-KW"/>
</dbReference>
<dbReference type="InterPro" id="IPR013231">
    <property type="entry name" value="Periviscerokinin"/>
</dbReference>
<dbReference type="Pfam" id="PF08259">
    <property type="entry name" value="Periviscerokin"/>
    <property type="match status" value="1"/>
</dbReference>
<reference evidence="4" key="1">
    <citation type="journal article" date="2009" name="BMC Evol. Biol.">
        <title>A proteomic approach for studying insect phylogeny: CAPA peptides of ancient insect taxa (Dictyoptera, Blattoptera) as a test case.</title>
        <authorList>
            <person name="Roth S."/>
            <person name="Fromm B."/>
            <person name="Gaede G."/>
            <person name="Predel R."/>
        </authorList>
    </citation>
    <scope>PROTEIN SEQUENCE</scope>
    <scope>AMIDATION AT VAL-11</scope>
    <source>
        <tissue evidence="2">Abdominal perisympathetic organs</tissue>
    </source>
</reference>